<protein>
    <recommendedName>
        <fullName evidence="1">Large ribosomal subunit protein uL4</fullName>
    </recommendedName>
    <alternativeName>
        <fullName evidence="3">50S ribosomal protein L4</fullName>
    </alternativeName>
</protein>
<organism>
    <name type="scientific">Brucella abortus (strain 2308)</name>
    <dbReference type="NCBI Taxonomy" id="359391"/>
    <lineage>
        <taxon>Bacteria</taxon>
        <taxon>Pseudomonadati</taxon>
        <taxon>Pseudomonadota</taxon>
        <taxon>Alphaproteobacteria</taxon>
        <taxon>Hyphomicrobiales</taxon>
        <taxon>Brucellaceae</taxon>
        <taxon>Brucella/Ochrobactrum group</taxon>
        <taxon>Brucella</taxon>
    </lineage>
</organism>
<gene>
    <name evidence="1" type="primary">rplD</name>
    <name type="ordered locus">BAB1_1254</name>
</gene>
<evidence type="ECO:0000255" key="1">
    <source>
        <dbReference type="HAMAP-Rule" id="MF_01328"/>
    </source>
</evidence>
<evidence type="ECO:0000256" key="2">
    <source>
        <dbReference type="SAM" id="MobiDB-lite"/>
    </source>
</evidence>
<evidence type="ECO:0000305" key="3"/>
<proteinExistence type="inferred from homology"/>
<sequence length="206" mass="22561">MDLTITTLEGKDAGKVKLNEEIFGLDPRDDILQRVVRWQLARRQQGSHKAQGRGDVSRTGSKMYKQKGTGRARHHSARAPQFRGGGQAHGPVVRNHDHDLPKKVRALGLRHALSAKAKASDLIIIDDLASADAKTKQLVSQFAKLGLENALLIGGAEIDANFQRAASNIPNIDVLPVQGINVYDILRRGKLVLSKAAVEALEERFK</sequence>
<keyword id="KW-1185">Reference proteome</keyword>
<keyword id="KW-0687">Ribonucleoprotein</keyword>
<keyword id="KW-0689">Ribosomal protein</keyword>
<keyword id="KW-0694">RNA-binding</keyword>
<keyword id="KW-0699">rRNA-binding</keyword>
<name>RL4_BRUA2</name>
<feature type="chain" id="PRO_0000242350" description="Large ribosomal subunit protein uL4">
    <location>
        <begin position="1"/>
        <end position="206"/>
    </location>
</feature>
<feature type="region of interest" description="Disordered" evidence="2">
    <location>
        <begin position="42"/>
        <end position="94"/>
    </location>
</feature>
<feature type="compositionally biased region" description="Basic residues" evidence="2">
    <location>
        <begin position="64"/>
        <end position="77"/>
    </location>
</feature>
<dbReference type="EMBL" id="AM040264">
    <property type="protein sequence ID" value="CAJ11210.1"/>
    <property type="molecule type" value="Genomic_DNA"/>
</dbReference>
<dbReference type="RefSeq" id="WP_002964361.1">
    <property type="nucleotide sequence ID" value="NZ_KN046823.1"/>
</dbReference>
<dbReference type="SMR" id="Q2YM04"/>
<dbReference type="STRING" id="359391.BAB1_1254"/>
<dbReference type="GeneID" id="93016440"/>
<dbReference type="KEGG" id="bmf:BAB1_1254"/>
<dbReference type="PATRIC" id="fig|359391.11.peg.154"/>
<dbReference type="HOGENOM" id="CLU_041575_5_1_5"/>
<dbReference type="PhylomeDB" id="Q2YM04"/>
<dbReference type="Proteomes" id="UP000002719">
    <property type="component" value="Chromosome I"/>
</dbReference>
<dbReference type="GO" id="GO:1990904">
    <property type="term" value="C:ribonucleoprotein complex"/>
    <property type="evidence" value="ECO:0007669"/>
    <property type="project" value="UniProtKB-KW"/>
</dbReference>
<dbReference type="GO" id="GO:0005840">
    <property type="term" value="C:ribosome"/>
    <property type="evidence" value="ECO:0007669"/>
    <property type="project" value="UniProtKB-KW"/>
</dbReference>
<dbReference type="GO" id="GO:0019843">
    <property type="term" value="F:rRNA binding"/>
    <property type="evidence" value="ECO:0007669"/>
    <property type="project" value="UniProtKB-UniRule"/>
</dbReference>
<dbReference type="GO" id="GO:0003735">
    <property type="term" value="F:structural constituent of ribosome"/>
    <property type="evidence" value="ECO:0007669"/>
    <property type="project" value="InterPro"/>
</dbReference>
<dbReference type="GO" id="GO:0006412">
    <property type="term" value="P:translation"/>
    <property type="evidence" value="ECO:0007669"/>
    <property type="project" value="UniProtKB-UniRule"/>
</dbReference>
<dbReference type="Gene3D" id="3.40.1370.10">
    <property type="match status" value="1"/>
</dbReference>
<dbReference type="HAMAP" id="MF_01328_B">
    <property type="entry name" value="Ribosomal_uL4_B"/>
    <property type="match status" value="1"/>
</dbReference>
<dbReference type="InterPro" id="IPR002136">
    <property type="entry name" value="Ribosomal_uL4"/>
</dbReference>
<dbReference type="InterPro" id="IPR013005">
    <property type="entry name" value="Ribosomal_uL4-like"/>
</dbReference>
<dbReference type="InterPro" id="IPR023574">
    <property type="entry name" value="Ribosomal_uL4_dom_sf"/>
</dbReference>
<dbReference type="NCBIfam" id="TIGR03953">
    <property type="entry name" value="rplD_bact"/>
    <property type="match status" value="1"/>
</dbReference>
<dbReference type="PANTHER" id="PTHR10746">
    <property type="entry name" value="50S RIBOSOMAL PROTEIN L4"/>
    <property type="match status" value="1"/>
</dbReference>
<dbReference type="PANTHER" id="PTHR10746:SF6">
    <property type="entry name" value="LARGE RIBOSOMAL SUBUNIT PROTEIN UL4M"/>
    <property type="match status" value="1"/>
</dbReference>
<dbReference type="Pfam" id="PF00573">
    <property type="entry name" value="Ribosomal_L4"/>
    <property type="match status" value="1"/>
</dbReference>
<dbReference type="SUPFAM" id="SSF52166">
    <property type="entry name" value="Ribosomal protein L4"/>
    <property type="match status" value="1"/>
</dbReference>
<accession>Q2YM04</accession>
<reference key="1">
    <citation type="journal article" date="2005" name="Infect. Immun.">
        <title>Whole-genome analyses of speciation events in pathogenic Brucellae.</title>
        <authorList>
            <person name="Chain P.S."/>
            <person name="Comerci D.J."/>
            <person name="Tolmasky M.E."/>
            <person name="Larimer F.W."/>
            <person name="Malfatti S.A."/>
            <person name="Vergez L.M."/>
            <person name="Aguero F."/>
            <person name="Land M.L."/>
            <person name="Ugalde R.A."/>
            <person name="Garcia E."/>
        </authorList>
    </citation>
    <scope>NUCLEOTIDE SEQUENCE [LARGE SCALE GENOMIC DNA]</scope>
    <source>
        <strain>2308</strain>
    </source>
</reference>
<comment type="function">
    <text evidence="1">One of the primary rRNA binding proteins, this protein initially binds near the 5'-end of the 23S rRNA. It is important during the early stages of 50S assembly. It makes multiple contacts with different domains of the 23S rRNA in the assembled 50S subunit and ribosome.</text>
</comment>
<comment type="function">
    <text evidence="1">Forms part of the polypeptide exit tunnel.</text>
</comment>
<comment type="subunit">
    <text evidence="1">Part of the 50S ribosomal subunit.</text>
</comment>
<comment type="similarity">
    <text evidence="1">Belongs to the universal ribosomal protein uL4 family.</text>
</comment>